<protein>
    <recommendedName>
        <fullName>Putative uncharacterized protein YPR076W</fullName>
    </recommendedName>
</protein>
<organism>
    <name type="scientific">Saccharomyces cerevisiae (strain ATCC 204508 / S288c)</name>
    <name type="common">Baker's yeast</name>
    <dbReference type="NCBI Taxonomy" id="559292"/>
    <lineage>
        <taxon>Eukaryota</taxon>
        <taxon>Fungi</taxon>
        <taxon>Dikarya</taxon>
        <taxon>Ascomycota</taxon>
        <taxon>Saccharomycotina</taxon>
        <taxon>Saccharomycetes</taxon>
        <taxon>Saccharomycetales</taxon>
        <taxon>Saccharomycetaceae</taxon>
        <taxon>Saccharomyces</taxon>
    </lineage>
</organism>
<accession>O13582</accession>
<sequence length="124" mass="13893">MKYNATKAISIAPPTIPTVNPTINEVFSFELLELELEEEEDKLLSCESDCFAQYVDGHLSHVNEVITQYSPEAQTGHDAVESQTTHPSLPLVAEVEEVAVLDKDELAEALEELDIFCLIFRKRT</sequence>
<comment type="miscellaneous">
    <text evidence="1">Almost completely overlaps OPY2.</text>
</comment>
<comment type="caution">
    <text evidence="2">Product of a dubious gene prediction unlikely to encode a functional protein. Because of that it is not part of the S.cerevisiae S288c complete/reference proteome set.</text>
</comment>
<feature type="chain" id="PRO_0000299820" description="Putative uncharacterized protein YPR076W">
    <location>
        <begin position="1"/>
        <end position="124"/>
    </location>
</feature>
<dbReference type="EMBL" id="U51033">
    <property type="protein sequence ID" value="AAB68143.1"/>
    <property type="molecule type" value="Genomic_DNA"/>
</dbReference>
<dbReference type="EMBL" id="AY693281">
    <property type="protein sequence ID" value="AAT93300.1"/>
    <property type="molecule type" value="Genomic_DNA"/>
</dbReference>
<dbReference type="PIR" id="S70043">
    <property type="entry name" value="S70043"/>
</dbReference>
<dbReference type="DIP" id="DIP-4975N"/>
<dbReference type="IntAct" id="O13582">
    <property type="interactions" value="3"/>
</dbReference>
<dbReference type="PaxDb" id="4932-YPR076W"/>
<dbReference type="EnsemblFungi" id="YPR076W_mRNA">
    <property type="protein sequence ID" value="YPR076W"/>
    <property type="gene ID" value="YPR076W"/>
</dbReference>
<dbReference type="AGR" id="SGD:S000006280"/>
<dbReference type="SGD" id="S000006280">
    <property type="gene designation" value="YPR076W"/>
</dbReference>
<dbReference type="HOGENOM" id="CLU_131688_0_0_1"/>
<reference key="1">
    <citation type="journal article" date="1997" name="Nature">
        <title>The nucleotide sequence of Saccharomyces cerevisiae chromosome XVI.</title>
        <authorList>
            <person name="Bussey H."/>
            <person name="Storms R.K."/>
            <person name="Ahmed A."/>
            <person name="Albermann K."/>
            <person name="Allen E."/>
            <person name="Ansorge W."/>
            <person name="Araujo R."/>
            <person name="Aparicio A."/>
            <person name="Barrell B.G."/>
            <person name="Badcock K."/>
            <person name="Benes V."/>
            <person name="Botstein D."/>
            <person name="Bowman S."/>
            <person name="Brueckner M."/>
            <person name="Carpenter J."/>
            <person name="Cherry J.M."/>
            <person name="Chung E."/>
            <person name="Churcher C.M."/>
            <person name="Coster F."/>
            <person name="Davis K."/>
            <person name="Davis R.W."/>
            <person name="Dietrich F.S."/>
            <person name="Delius H."/>
            <person name="DiPaolo T."/>
            <person name="Dubois E."/>
            <person name="Duesterhoeft A."/>
            <person name="Duncan M."/>
            <person name="Floeth M."/>
            <person name="Fortin N."/>
            <person name="Friesen J.D."/>
            <person name="Fritz C."/>
            <person name="Goffeau A."/>
            <person name="Hall J."/>
            <person name="Hebling U."/>
            <person name="Heumann K."/>
            <person name="Hilbert H."/>
            <person name="Hillier L.W."/>
            <person name="Hunicke-Smith S."/>
            <person name="Hyman R.W."/>
            <person name="Johnston M."/>
            <person name="Kalman S."/>
            <person name="Kleine K."/>
            <person name="Komp C."/>
            <person name="Kurdi O."/>
            <person name="Lashkari D."/>
            <person name="Lew H."/>
            <person name="Lin A."/>
            <person name="Lin D."/>
            <person name="Louis E.J."/>
            <person name="Marathe R."/>
            <person name="Messenguy F."/>
            <person name="Mewes H.-W."/>
            <person name="Mirtipati S."/>
            <person name="Moestl D."/>
            <person name="Mueller-Auer S."/>
            <person name="Namath A."/>
            <person name="Nentwich U."/>
            <person name="Oefner P."/>
            <person name="Pearson D."/>
            <person name="Petel F.X."/>
            <person name="Pohl T.M."/>
            <person name="Purnelle B."/>
            <person name="Rajandream M.A."/>
            <person name="Rechmann S."/>
            <person name="Rieger M."/>
            <person name="Riles L."/>
            <person name="Roberts D."/>
            <person name="Schaefer M."/>
            <person name="Scharfe M."/>
            <person name="Scherens B."/>
            <person name="Schramm S."/>
            <person name="Schroeder M."/>
            <person name="Sdicu A.-M."/>
            <person name="Tettelin H."/>
            <person name="Urrestarazu L.A."/>
            <person name="Ushinsky S."/>
            <person name="Vierendeels F."/>
            <person name="Vissers S."/>
            <person name="Voss H."/>
            <person name="Walsh S.V."/>
            <person name="Wambutt R."/>
            <person name="Wang Y."/>
            <person name="Wedler E."/>
            <person name="Wedler H."/>
            <person name="Winnett E."/>
            <person name="Zhong W.-W."/>
            <person name="Zollner A."/>
            <person name="Vo D.H."/>
            <person name="Hani J."/>
        </authorList>
    </citation>
    <scope>NUCLEOTIDE SEQUENCE [LARGE SCALE GENOMIC DNA]</scope>
    <source>
        <strain>ATCC 204508 / S288c</strain>
    </source>
</reference>
<reference key="2">
    <citation type="journal article" date="2014" name="G3 (Bethesda)">
        <title>The reference genome sequence of Saccharomyces cerevisiae: Then and now.</title>
        <authorList>
            <person name="Engel S.R."/>
            <person name="Dietrich F.S."/>
            <person name="Fisk D.G."/>
            <person name="Binkley G."/>
            <person name="Balakrishnan R."/>
            <person name="Costanzo M.C."/>
            <person name="Dwight S.S."/>
            <person name="Hitz B.C."/>
            <person name="Karra K."/>
            <person name="Nash R.S."/>
            <person name="Weng S."/>
            <person name="Wong E.D."/>
            <person name="Lloyd P."/>
            <person name="Skrzypek M.S."/>
            <person name="Miyasato S.R."/>
            <person name="Simison M."/>
            <person name="Cherry J.M."/>
        </authorList>
    </citation>
    <scope>GENOME REANNOTATION</scope>
    <source>
        <strain>ATCC 204508 / S288c</strain>
    </source>
</reference>
<reference key="3">
    <citation type="journal article" date="2007" name="Genome Res.">
        <title>Approaching a complete repository of sequence-verified protein-encoding clones for Saccharomyces cerevisiae.</title>
        <authorList>
            <person name="Hu Y."/>
            <person name="Rolfs A."/>
            <person name="Bhullar B."/>
            <person name="Murthy T.V.S."/>
            <person name="Zhu C."/>
            <person name="Berger M.F."/>
            <person name="Camargo A.A."/>
            <person name="Kelley F."/>
            <person name="McCarron S."/>
            <person name="Jepson D."/>
            <person name="Richardson A."/>
            <person name="Raphael J."/>
            <person name="Moreira D."/>
            <person name="Taycher E."/>
            <person name="Zuo D."/>
            <person name="Mohr S."/>
            <person name="Kane M.F."/>
            <person name="Williamson J."/>
            <person name="Simpson A.J.G."/>
            <person name="Bulyk M.L."/>
            <person name="Harlow E."/>
            <person name="Marsischky G."/>
            <person name="Kolodner R.D."/>
            <person name="LaBaer J."/>
        </authorList>
    </citation>
    <scope>NUCLEOTIDE SEQUENCE [GENOMIC DNA]</scope>
    <source>
        <strain>ATCC 204508 / S288c</strain>
    </source>
</reference>
<name>YP076_YEAST</name>
<evidence type="ECO:0000305" key="1"/>
<evidence type="ECO:0000305" key="2">
    <source>
    </source>
</evidence>
<proteinExistence type="uncertain"/>
<gene>
    <name type="ordered locus">YPR076W</name>
    <name type="ORF">P9513.9A</name>
</gene>